<reference key="1">
    <citation type="submission" date="2007-06" db="EMBL/GenBank/DDBJ databases">
        <title>Complete sequence of chromosome of Staphylococcus aureus subsp. aureus JH1.</title>
        <authorList>
            <consortium name="US DOE Joint Genome Institute"/>
            <person name="Copeland A."/>
            <person name="Lucas S."/>
            <person name="Lapidus A."/>
            <person name="Barry K."/>
            <person name="Detter J.C."/>
            <person name="Glavina del Rio T."/>
            <person name="Hammon N."/>
            <person name="Israni S."/>
            <person name="Dalin E."/>
            <person name="Tice H."/>
            <person name="Pitluck S."/>
            <person name="Chain P."/>
            <person name="Malfatti S."/>
            <person name="Shin M."/>
            <person name="Vergez L."/>
            <person name="Schmutz J."/>
            <person name="Larimer F."/>
            <person name="Land M."/>
            <person name="Hauser L."/>
            <person name="Kyrpides N."/>
            <person name="Ivanova N."/>
            <person name="Tomasz A."/>
            <person name="Richardson P."/>
        </authorList>
    </citation>
    <scope>NUCLEOTIDE SEQUENCE [LARGE SCALE GENOMIC DNA]</scope>
    <source>
        <strain>JH1</strain>
    </source>
</reference>
<evidence type="ECO:0000255" key="1">
    <source>
        <dbReference type="HAMAP-Rule" id="MF_01077"/>
    </source>
</evidence>
<name>RIMP_STAA2</name>
<accession>A6U184</accession>
<comment type="function">
    <text evidence="1">Required for maturation of 30S ribosomal subunits.</text>
</comment>
<comment type="subcellular location">
    <subcellularLocation>
        <location evidence="1">Cytoplasm</location>
    </subcellularLocation>
</comment>
<comment type="similarity">
    <text evidence="1">Belongs to the RimP family.</text>
</comment>
<sequence length="155" mass="17627">MSKITEQVEVIVQPIMEDLNFELVDVEYVKEGRDHFLRISIDKEGGVDLNDCTLASEKISEAMDANDPIPEMYYLDVASPGAERPIKKEQDFQNAITKPVFVSLYVPIEGEKEWLGILQEVNNETIVVQVKIKARTKDIEIPRDKIAKARHAVMI</sequence>
<gene>
    <name evidence="1" type="primary">rimP</name>
    <name type="ordered locus">SaurJH1_1351</name>
</gene>
<dbReference type="EMBL" id="CP000736">
    <property type="protein sequence ID" value="ABR52202.1"/>
    <property type="molecule type" value="Genomic_DNA"/>
</dbReference>
<dbReference type="SMR" id="A6U184"/>
<dbReference type="KEGG" id="sah:SaurJH1_1351"/>
<dbReference type="HOGENOM" id="CLU_070525_2_0_9"/>
<dbReference type="GO" id="GO:0005829">
    <property type="term" value="C:cytosol"/>
    <property type="evidence" value="ECO:0007669"/>
    <property type="project" value="TreeGrafter"/>
</dbReference>
<dbReference type="GO" id="GO:0000028">
    <property type="term" value="P:ribosomal small subunit assembly"/>
    <property type="evidence" value="ECO:0007669"/>
    <property type="project" value="TreeGrafter"/>
</dbReference>
<dbReference type="GO" id="GO:0006412">
    <property type="term" value="P:translation"/>
    <property type="evidence" value="ECO:0007669"/>
    <property type="project" value="TreeGrafter"/>
</dbReference>
<dbReference type="CDD" id="cd01734">
    <property type="entry name" value="YlxS_C"/>
    <property type="match status" value="1"/>
</dbReference>
<dbReference type="FunFam" id="3.30.300.70:FF:000001">
    <property type="entry name" value="Ribosome maturation factor RimP"/>
    <property type="match status" value="1"/>
</dbReference>
<dbReference type="Gene3D" id="2.30.30.180">
    <property type="entry name" value="Ribosome maturation factor RimP, C-terminal domain"/>
    <property type="match status" value="1"/>
</dbReference>
<dbReference type="Gene3D" id="3.30.300.70">
    <property type="entry name" value="RimP-like superfamily, N-terminal"/>
    <property type="match status" value="1"/>
</dbReference>
<dbReference type="HAMAP" id="MF_01077">
    <property type="entry name" value="RimP"/>
    <property type="match status" value="1"/>
</dbReference>
<dbReference type="InterPro" id="IPR003728">
    <property type="entry name" value="Ribosome_maturation_RimP"/>
</dbReference>
<dbReference type="InterPro" id="IPR028998">
    <property type="entry name" value="RimP_C"/>
</dbReference>
<dbReference type="InterPro" id="IPR036847">
    <property type="entry name" value="RimP_C_sf"/>
</dbReference>
<dbReference type="InterPro" id="IPR028989">
    <property type="entry name" value="RimP_N"/>
</dbReference>
<dbReference type="InterPro" id="IPR035956">
    <property type="entry name" value="RimP_N_sf"/>
</dbReference>
<dbReference type="NCBIfam" id="NF000928">
    <property type="entry name" value="PRK00092.1-2"/>
    <property type="match status" value="1"/>
</dbReference>
<dbReference type="PANTHER" id="PTHR33867">
    <property type="entry name" value="RIBOSOME MATURATION FACTOR RIMP"/>
    <property type="match status" value="1"/>
</dbReference>
<dbReference type="PANTHER" id="PTHR33867:SF1">
    <property type="entry name" value="RIBOSOME MATURATION FACTOR RIMP"/>
    <property type="match status" value="1"/>
</dbReference>
<dbReference type="Pfam" id="PF17384">
    <property type="entry name" value="DUF150_C"/>
    <property type="match status" value="1"/>
</dbReference>
<dbReference type="Pfam" id="PF02576">
    <property type="entry name" value="RimP_N"/>
    <property type="match status" value="1"/>
</dbReference>
<dbReference type="SUPFAM" id="SSF74942">
    <property type="entry name" value="YhbC-like, C-terminal domain"/>
    <property type="match status" value="1"/>
</dbReference>
<dbReference type="SUPFAM" id="SSF75420">
    <property type="entry name" value="YhbC-like, N-terminal domain"/>
    <property type="match status" value="1"/>
</dbReference>
<organism>
    <name type="scientific">Staphylococcus aureus (strain JH1)</name>
    <dbReference type="NCBI Taxonomy" id="359787"/>
    <lineage>
        <taxon>Bacteria</taxon>
        <taxon>Bacillati</taxon>
        <taxon>Bacillota</taxon>
        <taxon>Bacilli</taxon>
        <taxon>Bacillales</taxon>
        <taxon>Staphylococcaceae</taxon>
        <taxon>Staphylococcus</taxon>
    </lineage>
</organism>
<protein>
    <recommendedName>
        <fullName evidence="1">Ribosome maturation factor RimP</fullName>
    </recommendedName>
</protein>
<feature type="chain" id="PRO_1000084536" description="Ribosome maturation factor RimP">
    <location>
        <begin position="1"/>
        <end position="155"/>
    </location>
</feature>
<keyword id="KW-0963">Cytoplasm</keyword>
<keyword id="KW-0690">Ribosome biogenesis</keyword>
<proteinExistence type="inferred from homology"/>